<feature type="chain" id="PRO_0000296636" description="Small, acid-soluble spore protein Tlp">
    <location>
        <begin position="1"/>
        <end position="75"/>
    </location>
</feature>
<evidence type="ECO:0000255" key="1">
    <source>
        <dbReference type="HAMAP-Rule" id="MF_01506"/>
    </source>
</evidence>
<evidence type="ECO:0000305" key="2"/>
<accession>A4IN75</accession>
<gene>
    <name evidence="1" type="primary">tlp</name>
    <name type="ordered locus">GTNG_1409</name>
</gene>
<comment type="subcellular location">
    <subcellularLocation>
        <location evidence="1">Spore core</location>
    </subcellularLocation>
</comment>
<comment type="induction">
    <text evidence="1">Expressed only in the forespore compartment of sporulating cells.</text>
</comment>
<comment type="similarity">
    <text evidence="1">Belongs to the Tlp family.</text>
</comment>
<comment type="sequence caution" evidence="2">
    <conflict type="erroneous initiation">
        <sequence resource="EMBL-CDS" id="ABO66779"/>
    </conflict>
</comment>
<name>TLP_GEOTN</name>
<proteinExistence type="inferred from homology"/>
<dbReference type="EMBL" id="CP000557">
    <property type="protein sequence ID" value="ABO66779.1"/>
    <property type="status" value="ALT_INIT"/>
    <property type="molecule type" value="Genomic_DNA"/>
</dbReference>
<dbReference type="RefSeq" id="WP_008879300.1">
    <property type="nucleotide sequence ID" value="NC_009328.1"/>
</dbReference>
<dbReference type="SMR" id="A4IN75"/>
<dbReference type="GeneID" id="87621003"/>
<dbReference type="KEGG" id="gtn:GTNG_1409"/>
<dbReference type="eggNOG" id="ENOG50330RR">
    <property type="taxonomic scope" value="Bacteria"/>
</dbReference>
<dbReference type="HOGENOM" id="CLU_178266_1_0_9"/>
<dbReference type="Proteomes" id="UP000001578">
    <property type="component" value="Chromosome"/>
</dbReference>
<dbReference type="GO" id="GO:0030436">
    <property type="term" value="P:asexual sporulation"/>
    <property type="evidence" value="ECO:0007669"/>
    <property type="project" value="UniProtKB-UniRule"/>
</dbReference>
<dbReference type="GO" id="GO:0030435">
    <property type="term" value="P:sporulation resulting in formation of a cellular spore"/>
    <property type="evidence" value="ECO:0007669"/>
    <property type="project" value="UniProtKB-KW"/>
</dbReference>
<dbReference type="HAMAP" id="MF_01506">
    <property type="entry name" value="Tlp"/>
    <property type="match status" value="1"/>
</dbReference>
<dbReference type="InterPro" id="IPR017524">
    <property type="entry name" value="SASP_thioredoxin-like"/>
</dbReference>
<dbReference type="NCBIfam" id="TIGR03090">
    <property type="entry name" value="SASP_tlp"/>
    <property type="match status" value="1"/>
</dbReference>
<dbReference type="Pfam" id="PF19824">
    <property type="entry name" value="Tlp"/>
    <property type="match status" value="1"/>
</dbReference>
<organism>
    <name type="scientific">Geobacillus thermodenitrificans (strain NG80-2)</name>
    <dbReference type="NCBI Taxonomy" id="420246"/>
    <lineage>
        <taxon>Bacteria</taxon>
        <taxon>Bacillati</taxon>
        <taxon>Bacillota</taxon>
        <taxon>Bacilli</taxon>
        <taxon>Bacillales</taxon>
        <taxon>Anoxybacillaceae</taxon>
        <taxon>Geobacillus</taxon>
    </lineage>
</organism>
<sequence length="75" mass="8884">MPRPKPDDRSDNVEKLQDMVQNTIENIEKAEETMQFASPEERERIREKNRRREEAIAAMRAEIKDEAAAREHGYQ</sequence>
<reference key="1">
    <citation type="journal article" date="2007" name="Proc. Natl. Acad. Sci. U.S.A.">
        <title>Genome and proteome of long-chain alkane degrading Geobacillus thermodenitrificans NG80-2 isolated from a deep-subsurface oil reservoir.</title>
        <authorList>
            <person name="Feng L."/>
            <person name="Wang W."/>
            <person name="Cheng J."/>
            <person name="Ren Y."/>
            <person name="Zhao G."/>
            <person name="Gao C."/>
            <person name="Tang Y."/>
            <person name="Liu X."/>
            <person name="Han W."/>
            <person name="Peng X."/>
            <person name="Liu R."/>
            <person name="Wang L."/>
        </authorList>
    </citation>
    <scope>NUCLEOTIDE SEQUENCE [LARGE SCALE GENOMIC DNA]</scope>
    <source>
        <strain>NG80-2</strain>
    </source>
</reference>
<keyword id="KW-0749">Sporulation</keyword>
<protein>
    <recommendedName>
        <fullName evidence="1">Small, acid-soluble spore protein Tlp</fullName>
    </recommendedName>
</protein>